<proteinExistence type="inferred from homology"/>
<reference key="1">
    <citation type="journal article" date="2010" name="BMC Genomics">
        <title>A genomic perspective on the potential of Actinobacillus succinogenes for industrial succinate production.</title>
        <authorList>
            <person name="McKinlay J.B."/>
            <person name="Laivenieks M."/>
            <person name="Schindler B.D."/>
            <person name="McKinlay A.A."/>
            <person name="Siddaramappa S."/>
            <person name="Challacombe J.F."/>
            <person name="Lowry S.R."/>
            <person name="Clum A."/>
            <person name="Lapidus A.L."/>
            <person name="Burkhart K.B."/>
            <person name="Harkins V."/>
            <person name="Vieille C."/>
        </authorList>
    </citation>
    <scope>NUCLEOTIDE SEQUENCE [LARGE SCALE GENOMIC DNA]</scope>
    <source>
        <strain>ATCC 55618 / DSM 22257 / CCUG 43843 / 130Z</strain>
    </source>
</reference>
<organism>
    <name type="scientific">Actinobacillus succinogenes (strain ATCC 55618 / DSM 22257 / CCUG 43843 / 130Z)</name>
    <dbReference type="NCBI Taxonomy" id="339671"/>
    <lineage>
        <taxon>Bacteria</taxon>
        <taxon>Pseudomonadati</taxon>
        <taxon>Pseudomonadota</taxon>
        <taxon>Gammaproteobacteria</taxon>
        <taxon>Pasteurellales</taxon>
        <taxon>Pasteurellaceae</taxon>
        <taxon>Actinobacillus</taxon>
    </lineage>
</organism>
<name>ZAPA_ACTSZ</name>
<evidence type="ECO:0000250" key="1"/>
<evidence type="ECO:0000255" key="2"/>
<evidence type="ECO:0000305" key="3"/>
<sequence length="107" mass="12334">MALKPIELNFLGQVVRLNAPEEQHNDLRDAAKELDKRVSEMKDRMQTVQVERAVHVVALNLCFELLLEKQKTKSTEQILQNQIQQLSHSLENIAARSTNQQPAYEIQ</sequence>
<gene>
    <name type="primary">zapA</name>
    <name type="ordered locus">Asuc_0659</name>
</gene>
<dbReference type="EMBL" id="CP000746">
    <property type="protein sequence ID" value="ABR74032.1"/>
    <property type="molecule type" value="Genomic_DNA"/>
</dbReference>
<dbReference type="RefSeq" id="WP_012072412.1">
    <property type="nucleotide sequence ID" value="NC_009655.1"/>
</dbReference>
<dbReference type="SMR" id="A6VM35"/>
<dbReference type="STRING" id="339671.Asuc_0659"/>
<dbReference type="KEGG" id="asu:Asuc_0659"/>
<dbReference type="eggNOG" id="COG3027">
    <property type="taxonomic scope" value="Bacteria"/>
</dbReference>
<dbReference type="HOGENOM" id="CLU_116623_3_0_6"/>
<dbReference type="OrthoDB" id="5917174at2"/>
<dbReference type="Proteomes" id="UP000001114">
    <property type="component" value="Chromosome"/>
</dbReference>
<dbReference type="GO" id="GO:0032153">
    <property type="term" value="C:cell division site"/>
    <property type="evidence" value="ECO:0007669"/>
    <property type="project" value="TreeGrafter"/>
</dbReference>
<dbReference type="GO" id="GO:0030428">
    <property type="term" value="C:cell septum"/>
    <property type="evidence" value="ECO:0007669"/>
    <property type="project" value="TreeGrafter"/>
</dbReference>
<dbReference type="GO" id="GO:0005829">
    <property type="term" value="C:cytosol"/>
    <property type="evidence" value="ECO:0007669"/>
    <property type="project" value="TreeGrafter"/>
</dbReference>
<dbReference type="GO" id="GO:0000917">
    <property type="term" value="P:division septum assembly"/>
    <property type="evidence" value="ECO:0007669"/>
    <property type="project" value="UniProtKB-KW"/>
</dbReference>
<dbReference type="GO" id="GO:0043093">
    <property type="term" value="P:FtsZ-dependent cytokinesis"/>
    <property type="evidence" value="ECO:0007669"/>
    <property type="project" value="TreeGrafter"/>
</dbReference>
<dbReference type="GO" id="GO:0000921">
    <property type="term" value="P:septin ring assembly"/>
    <property type="evidence" value="ECO:0007669"/>
    <property type="project" value="TreeGrafter"/>
</dbReference>
<dbReference type="Gene3D" id="3.30.160.880">
    <property type="entry name" value="Cell division protein ZapA protomer, N-terminal domain"/>
    <property type="match status" value="1"/>
</dbReference>
<dbReference type="InterPro" id="IPR007838">
    <property type="entry name" value="Cell_div_ZapA-like"/>
</dbReference>
<dbReference type="InterPro" id="IPR036192">
    <property type="entry name" value="Cell_div_ZapA-like_sf"/>
</dbReference>
<dbReference type="InterPro" id="IPR042233">
    <property type="entry name" value="Cell_div_ZapA_N"/>
</dbReference>
<dbReference type="PANTHER" id="PTHR34981">
    <property type="entry name" value="CELL DIVISION PROTEIN ZAPA"/>
    <property type="match status" value="1"/>
</dbReference>
<dbReference type="PANTHER" id="PTHR34981:SF1">
    <property type="entry name" value="CELL DIVISION PROTEIN ZAPA"/>
    <property type="match status" value="1"/>
</dbReference>
<dbReference type="Pfam" id="PF05164">
    <property type="entry name" value="ZapA"/>
    <property type="match status" value="1"/>
</dbReference>
<dbReference type="SUPFAM" id="SSF102829">
    <property type="entry name" value="Cell division protein ZapA-like"/>
    <property type="match status" value="1"/>
</dbReference>
<keyword id="KW-0131">Cell cycle</keyword>
<keyword id="KW-0132">Cell division</keyword>
<keyword id="KW-0175">Coiled coil</keyword>
<keyword id="KW-0963">Cytoplasm</keyword>
<keyword id="KW-1185">Reference proteome</keyword>
<keyword id="KW-0717">Septation</keyword>
<protein>
    <recommendedName>
        <fullName>Cell division protein ZapA</fullName>
    </recommendedName>
    <alternativeName>
        <fullName>Z ring-associated protein ZapA</fullName>
    </alternativeName>
</protein>
<comment type="function">
    <text evidence="1">Activator of cell division through the inhibition of FtsZ GTPase activity, therefore promoting FtsZ assembly into bundles of protofilaments necessary for the formation of the division Z ring. It is recruited early at mid-cell but it is not essential for cell division (By similarity).</text>
</comment>
<comment type="subunit">
    <text evidence="1">Homodimer. Interacts with FtsZ (By similarity).</text>
</comment>
<comment type="subcellular location">
    <subcellularLocation>
        <location evidence="1">Cytoplasm</location>
    </subcellularLocation>
    <text evidence="1">Localizes at mid-cell.</text>
</comment>
<comment type="similarity">
    <text evidence="3">Belongs to the ZapA family. Type 1 subfamily.</text>
</comment>
<accession>A6VM35</accession>
<feature type="chain" id="PRO_0000346120" description="Cell division protein ZapA">
    <location>
        <begin position="1"/>
        <end position="107"/>
    </location>
</feature>
<feature type="coiled-coil region" evidence="2">
    <location>
        <begin position="21"/>
        <end position="99"/>
    </location>
</feature>